<comment type="function">
    <text evidence="1">Acts as a chaperone.</text>
</comment>
<comment type="induction">
    <text evidence="1">By stress conditions e.g. heat shock.</text>
</comment>
<comment type="similarity">
    <text evidence="1">Belongs to the heat shock protein 70 family.</text>
</comment>
<gene>
    <name evidence="1" type="primary">dnaK</name>
    <name type="ordered locus">BDI_1997</name>
</gene>
<accession>A6LDG8</accession>
<organism>
    <name type="scientific">Parabacteroides distasonis (strain ATCC 8503 / DSM 20701 / CIP 104284 / JCM 5825 / NCTC 11152)</name>
    <dbReference type="NCBI Taxonomy" id="435591"/>
    <lineage>
        <taxon>Bacteria</taxon>
        <taxon>Pseudomonadati</taxon>
        <taxon>Bacteroidota</taxon>
        <taxon>Bacteroidia</taxon>
        <taxon>Bacteroidales</taxon>
        <taxon>Tannerellaceae</taxon>
        <taxon>Parabacteroides</taxon>
    </lineage>
</organism>
<feature type="chain" id="PRO_1000059622" description="Chaperone protein DnaK">
    <location>
        <begin position="1"/>
        <end position="643"/>
    </location>
</feature>
<feature type="region of interest" description="Disordered" evidence="2">
    <location>
        <begin position="599"/>
        <end position="643"/>
    </location>
</feature>
<feature type="modified residue" description="Phosphothreonine; by autocatalysis" evidence="1">
    <location>
        <position position="197"/>
    </location>
</feature>
<sequence length="643" mass="69035">MGKIIGIDLGTTNSCVAVLEGNEPVVIANSEGKRTTPSIVAFVEGGERKVGDPAKRQAITNPEKTIFSIKRFMGETYDQVQKEINRVPYKVVRGDNNTPRVDIEGRLYTPQEISAMILQKMKKTAEDYLGQEVTEAVITVPAYFSDAQRQATKEAGEIAGLTVRRIVNEPTAASLAYGLDKTNKDMKIAVFDLGGGTFDISILELGDGVFEVKSTNGDTHLGGDDFDHVIIDWLAEEFEREEGVDLRKDPMALQRLKEAAEKAKIELSSTTSTEINLPYIMPVNGIPKHLVKTLTRAKFEQLADGLIQACIEPCRQSLKDAGLSTSDIDEVILVGGSTRIPAVQAIVEKFFGKAPSKGVNPDEVVAVGAAIQGGVLTGEVKDVLLLDVTPLSLGIETMGGVMTKLIESNTTIPTKKSETFTTAVDNQPSVEIHILQGERSLAKDNKSIGRFHLDGIPAAQRGVPQIEVTFDIDANGILNVSAKDKGTGKVQSIRIEASSGLSDDEVKRMKEEAAANAEADKKEKERIDKLNQADSMIFQTEKQLKDLGDKLPADKKAPIEGALNKLKEAHKAQDIAGIDAAMAELNSVFQAASQEMYNAQGGGAQGGPQADPNFGGQQAGGNAGSSNNSKDGNVTDVDFEEVK</sequence>
<dbReference type="EMBL" id="CP000140">
    <property type="protein sequence ID" value="ABR43732.1"/>
    <property type="molecule type" value="Genomic_DNA"/>
</dbReference>
<dbReference type="RefSeq" id="WP_005864708.1">
    <property type="nucleotide sequence ID" value="NC_009615.1"/>
</dbReference>
<dbReference type="SMR" id="A6LDG8"/>
<dbReference type="STRING" id="435591.BDI_1997"/>
<dbReference type="PaxDb" id="435591-BDI_1997"/>
<dbReference type="KEGG" id="pdi:BDI_1997"/>
<dbReference type="eggNOG" id="COG0443">
    <property type="taxonomic scope" value="Bacteria"/>
</dbReference>
<dbReference type="HOGENOM" id="CLU_005965_2_1_10"/>
<dbReference type="BioCyc" id="PDIS435591:G1G5A-2050-MONOMER"/>
<dbReference type="Proteomes" id="UP000000566">
    <property type="component" value="Chromosome"/>
</dbReference>
<dbReference type="GO" id="GO:0005524">
    <property type="term" value="F:ATP binding"/>
    <property type="evidence" value="ECO:0007669"/>
    <property type="project" value="UniProtKB-UniRule"/>
</dbReference>
<dbReference type="GO" id="GO:0140662">
    <property type="term" value="F:ATP-dependent protein folding chaperone"/>
    <property type="evidence" value="ECO:0007669"/>
    <property type="project" value="InterPro"/>
</dbReference>
<dbReference type="GO" id="GO:0051082">
    <property type="term" value="F:unfolded protein binding"/>
    <property type="evidence" value="ECO:0007669"/>
    <property type="project" value="InterPro"/>
</dbReference>
<dbReference type="CDD" id="cd10234">
    <property type="entry name" value="ASKHA_NBD_HSP70_DnaK-like"/>
    <property type="match status" value="1"/>
</dbReference>
<dbReference type="FunFam" id="2.60.34.10:FF:000014">
    <property type="entry name" value="Chaperone protein DnaK HSP70"/>
    <property type="match status" value="1"/>
</dbReference>
<dbReference type="FunFam" id="3.30.420.40:FF:000020">
    <property type="entry name" value="Chaperone protein HscA homolog"/>
    <property type="match status" value="1"/>
</dbReference>
<dbReference type="FunFam" id="3.30.30.30:FF:000005">
    <property type="entry name" value="Heat shock protein ssb1"/>
    <property type="match status" value="1"/>
</dbReference>
<dbReference type="FunFam" id="1.20.1270.10:FF:000001">
    <property type="entry name" value="Molecular chaperone DnaK"/>
    <property type="match status" value="1"/>
</dbReference>
<dbReference type="FunFam" id="3.30.420.40:FF:000004">
    <property type="entry name" value="Molecular chaperone DnaK"/>
    <property type="match status" value="1"/>
</dbReference>
<dbReference type="FunFam" id="3.90.640.10:FF:000003">
    <property type="entry name" value="Molecular chaperone DnaK"/>
    <property type="match status" value="1"/>
</dbReference>
<dbReference type="Gene3D" id="1.20.1270.10">
    <property type="match status" value="1"/>
</dbReference>
<dbReference type="Gene3D" id="3.30.420.40">
    <property type="match status" value="2"/>
</dbReference>
<dbReference type="Gene3D" id="3.90.640.10">
    <property type="entry name" value="Actin, Chain A, domain 4"/>
    <property type="match status" value="1"/>
</dbReference>
<dbReference type="Gene3D" id="2.60.34.10">
    <property type="entry name" value="Substrate Binding Domain Of DNAk, Chain A, domain 1"/>
    <property type="match status" value="1"/>
</dbReference>
<dbReference type="HAMAP" id="MF_00332">
    <property type="entry name" value="DnaK"/>
    <property type="match status" value="1"/>
</dbReference>
<dbReference type="InterPro" id="IPR043129">
    <property type="entry name" value="ATPase_NBD"/>
</dbReference>
<dbReference type="InterPro" id="IPR012725">
    <property type="entry name" value="Chaperone_DnaK"/>
</dbReference>
<dbReference type="InterPro" id="IPR018181">
    <property type="entry name" value="Heat_shock_70_CS"/>
</dbReference>
<dbReference type="InterPro" id="IPR029048">
    <property type="entry name" value="HSP70_C_sf"/>
</dbReference>
<dbReference type="InterPro" id="IPR029047">
    <property type="entry name" value="HSP70_peptide-bd_sf"/>
</dbReference>
<dbReference type="InterPro" id="IPR013126">
    <property type="entry name" value="Hsp_70_fam"/>
</dbReference>
<dbReference type="NCBIfam" id="NF001413">
    <property type="entry name" value="PRK00290.1"/>
    <property type="match status" value="1"/>
</dbReference>
<dbReference type="NCBIfam" id="NF003520">
    <property type="entry name" value="PRK05183.1"/>
    <property type="match status" value="1"/>
</dbReference>
<dbReference type="NCBIfam" id="TIGR02350">
    <property type="entry name" value="prok_dnaK"/>
    <property type="match status" value="1"/>
</dbReference>
<dbReference type="PANTHER" id="PTHR19375">
    <property type="entry name" value="HEAT SHOCK PROTEIN 70KDA"/>
    <property type="match status" value="1"/>
</dbReference>
<dbReference type="Pfam" id="PF00012">
    <property type="entry name" value="HSP70"/>
    <property type="match status" value="1"/>
</dbReference>
<dbReference type="PRINTS" id="PR00301">
    <property type="entry name" value="HEATSHOCK70"/>
</dbReference>
<dbReference type="SUPFAM" id="SSF53067">
    <property type="entry name" value="Actin-like ATPase domain"/>
    <property type="match status" value="2"/>
</dbReference>
<dbReference type="SUPFAM" id="SSF100934">
    <property type="entry name" value="Heat shock protein 70kD (HSP70), C-terminal subdomain"/>
    <property type="match status" value="1"/>
</dbReference>
<dbReference type="SUPFAM" id="SSF100920">
    <property type="entry name" value="Heat shock protein 70kD (HSP70), peptide-binding domain"/>
    <property type="match status" value="1"/>
</dbReference>
<dbReference type="PROSITE" id="PS00297">
    <property type="entry name" value="HSP70_1"/>
    <property type="match status" value="1"/>
</dbReference>
<dbReference type="PROSITE" id="PS00329">
    <property type="entry name" value="HSP70_2"/>
    <property type="match status" value="1"/>
</dbReference>
<dbReference type="PROSITE" id="PS01036">
    <property type="entry name" value="HSP70_3"/>
    <property type="match status" value="1"/>
</dbReference>
<reference key="1">
    <citation type="journal article" date="2007" name="PLoS Biol.">
        <title>Evolution of symbiotic bacteria in the distal human intestine.</title>
        <authorList>
            <person name="Xu J."/>
            <person name="Mahowald M.A."/>
            <person name="Ley R.E."/>
            <person name="Lozupone C.A."/>
            <person name="Hamady M."/>
            <person name="Martens E.C."/>
            <person name="Henrissat B."/>
            <person name="Coutinho P.M."/>
            <person name="Minx P."/>
            <person name="Latreille P."/>
            <person name="Cordum H."/>
            <person name="Van Brunt A."/>
            <person name="Kim K."/>
            <person name="Fulton R.S."/>
            <person name="Fulton L.A."/>
            <person name="Clifton S.W."/>
            <person name="Wilson R.K."/>
            <person name="Knight R.D."/>
            <person name="Gordon J.I."/>
        </authorList>
    </citation>
    <scope>NUCLEOTIDE SEQUENCE [LARGE SCALE GENOMIC DNA]</scope>
    <source>
        <strain>ATCC 8503 / DSM 20701 / CIP 104284 / JCM 5825 / NCTC 11152</strain>
    </source>
</reference>
<evidence type="ECO:0000255" key="1">
    <source>
        <dbReference type="HAMAP-Rule" id="MF_00332"/>
    </source>
</evidence>
<evidence type="ECO:0000256" key="2">
    <source>
        <dbReference type="SAM" id="MobiDB-lite"/>
    </source>
</evidence>
<proteinExistence type="inferred from homology"/>
<keyword id="KW-0067">ATP-binding</keyword>
<keyword id="KW-0143">Chaperone</keyword>
<keyword id="KW-0547">Nucleotide-binding</keyword>
<keyword id="KW-0597">Phosphoprotein</keyword>
<keyword id="KW-1185">Reference proteome</keyword>
<keyword id="KW-0346">Stress response</keyword>
<name>DNAK_PARD8</name>
<protein>
    <recommendedName>
        <fullName evidence="1">Chaperone protein DnaK</fullName>
    </recommendedName>
    <alternativeName>
        <fullName evidence="1">HSP70</fullName>
    </alternativeName>
    <alternativeName>
        <fullName evidence="1">Heat shock 70 kDa protein</fullName>
    </alternativeName>
    <alternativeName>
        <fullName evidence="1">Heat shock protein 70</fullName>
    </alternativeName>
</protein>